<feature type="chain" id="PRO_0000173829" description="26S proteasome non-ATPase regulatory subunit 4">
    <location>
        <begin position="1"/>
        <end position="376"/>
    </location>
</feature>
<feature type="domain" description="VWFA" evidence="4">
    <location>
        <begin position="5"/>
        <end position="188"/>
    </location>
</feature>
<feature type="domain" description="UIM 1" evidence="3">
    <location>
        <begin position="211"/>
        <end position="230"/>
    </location>
</feature>
<feature type="domain" description="UIM 2" evidence="3">
    <location>
        <begin position="282"/>
        <end position="301"/>
    </location>
</feature>
<feature type="region of interest" description="Interaction with UBQLN1" evidence="2">
    <location>
        <begin position="197"/>
        <end position="262"/>
    </location>
</feature>
<feature type="region of interest" description="Disordered" evidence="5">
    <location>
        <begin position="224"/>
        <end position="257"/>
    </location>
</feature>
<feature type="region of interest" description="Disordered" evidence="5">
    <location>
        <begin position="355"/>
        <end position="376"/>
    </location>
</feature>
<feature type="compositionally biased region" description="Basic and acidic residues" evidence="5">
    <location>
        <begin position="224"/>
        <end position="237"/>
    </location>
</feature>
<feature type="compositionally biased region" description="Basic and acidic residues" evidence="5">
    <location>
        <begin position="364"/>
        <end position="376"/>
    </location>
</feature>
<feature type="modified residue" description="Phosphothreonine" evidence="9 10 11">
    <location>
        <position position="250"/>
    </location>
</feature>
<feature type="modified residue" description="Phosphothreonine" evidence="11">
    <location>
        <position position="253"/>
    </location>
</feature>
<feature type="modified residue" description="Phosphoserine" evidence="11">
    <location>
        <position position="256"/>
    </location>
</feature>
<feature type="modified residue" description="Phosphoserine" evidence="2">
    <location>
        <position position="360"/>
    </location>
</feature>
<feature type="cross-link" description="Glycyl lysine isopeptide (Lys-Gly) (interchain with G-Cter in SUMO2)" evidence="2">
    <location>
        <position position="122"/>
    </location>
</feature>
<feature type="splice variant" id="VSP_005293" description="In isoform Rpn10B and isoform Rpn10C." evidence="7">
    <original>E</original>
    <variation>EGER</variation>
    <location>
        <position position="254"/>
    </location>
</feature>
<feature type="splice variant" id="VSP_005298" description="In isoform Rpn10E." evidence="8">
    <original>DSDDAL</original>
    <variation>GERGGF</variation>
    <location>
        <begin position="255"/>
        <end position="260"/>
    </location>
</feature>
<feature type="splice variant" id="VSP_005299" description="In isoform Rpn10E." evidence="8">
    <location>
        <begin position="261"/>
        <end position="376"/>
    </location>
</feature>
<feature type="splice variant" id="VSP_005296" description="In isoform Rpn10D." evidence="8">
    <original>EFSQESADMDASSAMDTSDPVKEEDDYDVMQDPEFLQSVLENLPGVDPNNA</original>
    <variation>GGPWLGWQGLDRVWGEELALSGLLLSFPQSLAKNRLTWMPAQPWTHLIQSR</variation>
    <location>
        <begin position="299"/>
        <end position="349"/>
    </location>
</feature>
<feature type="splice variant" id="VSP_005294" description="In isoform Rpn10C." evidence="8">
    <original>EEDDYDVMQDPEFLQSVLENLPGVDPNNAAIRSVMGALASQATKD</original>
    <variation>VRASSEALTQPSLTSPAFRSLSFWDQGLSSLAFHKKGLGATEGNT</variation>
    <location>
        <begin position="321"/>
        <end position="365"/>
    </location>
</feature>
<feature type="splice variant" id="VSP_005297" description="In isoform Rpn10D." evidence="8">
    <location>
        <begin position="350"/>
        <end position="376"/>
    </location>
</feature>
<feature type="splice variant" id="VSP_005295" description="In isoform Rpn10C." evidence="8">
    <location>
        <begin position="366"/>
        <end position="376"/>
    </location>
</feature>
<feature type="modified residue" description="Phosphothreonine" evidence="11">
    <location sequence="O35226-2">
        <position position="250"/>
    </location>
</feature>
<feature type="modified residue" description="Phosphoserine" evidence="11">
    <location sequence="O35226-2">
        <position position="259"/>
    </location>
</feature>
<feature type="modified residue" description="Phosphothreonine" evidence="11">
    <location sequence="O35226-3">
        <position position="250"/>
    </location>
</feature>
<feature type="modified residue" description="Phosphoserine" evidence="11">
    <location sequence="O35226-3">
        <position position="259"/>
    </location>
</feature>
<name>PSMD4_MOUSE</name>
<comment type="function">
    <text evidence="2">Component of the 26S proteasome, a multiprotein complex involved in the ATP-dependent degradation of ubiquitinated proteins. This complex plays a key role in the maintenance of protein homeostasis by removing misfolded or damaged proteins, which could impair cellular functions, and by removing proteins whose functions are no longer required. Therefore, the proteasome participates in numerous cellular processes, including cell cycle progression, apoptosis, or DNA damage repair. PSMD4 acts as an ubiquitin receptor subunit through ubiquitin-interacting motifs and selects ubiquitin-conjugates for destruction. Displays a preferred selectivity for longer polyubiquitin chains.</text>
</comment>
<comment type="subunit">
    <text evidence="2 6">Component of the 19S proteasome regulatory particle complex. The 26S proteasome consists of a 20S core particle (CP) and two 19S regulatory subunits (RP). The regulatory particle is made of a lid composed of 9 subunits, a base containing 6 ATPases and few additional components including PSMD4 (PubMed:16857966). Interacts with NUB1. Interacts with SQSTM1. Interacts with UBQLN4. Interacts with UBE3A. Interacts with UBQLN1 (via ubiquitin-like domain). Interacts with DDI2 (By similarity).</text>
</comment>
<comment type="alternative products">
    <event type="alternative splicing"/>
    <isoform>
        <id>O35226-1</id>
        <name>Rpn10A</name>
        <sequence type="displayed"/>
    </isoform>
    <isoform>
        <id>O35226-2</id>
        <name>Rpn10B</name>
        <sequence type="described" ref="VSP_005293"/>
    </isoform>
    <isoform>
        <id>O35226-3</id>
        <name>Rpn10C</name>
        <sequence type="described" ref="VSP_005293 VSP_005294 VSP_005295"/>
    </isoform>
    <isoform>
        <id>O35226-4</id>
        <name>Rpn10D</name>
        <sequence type="described" ref="VSP_005296 VSP_005297"/>
    </isoform>
    <isoform>
        <id>O35226-5</id>
        <name>Rpn10E</name>
        <sequence type="described" ref="VSP_005298 VSP_005299"/>
    </isoform>
</comment>
<comment type="tissue specificity">
    <text>Isoform Rpn10A is ubiquitous whereas isoform Rpn10E is mostly expressed in the embryonic brain.</text>
</comment>
<comment type="developmental stage">
    <text>Isoform Rpn10E is expressed only in the embryos.</text>
</comment>
<comment type="domain">
    <text evidence="1">The 2 UIM motifs are involved in the binding to a multi-ubiquitin chain in a cooperative way.</text>
</comment>
<comment type="similarity">
    <text evidence="8">Belongs to the proteasome subunit S5A family.</text>
</comment>
<keyword id="KW-0025">Alternative splicing</keyword>
<keyword id="KW-1017">Isopeptide bond</keyword>
<keyword id="KW-0597">Phosphoprotein</keyword>
<keyword id="KW-0647">Proteasome</keyword>
<keyword id="KW-1185">Reference proteome</keyword>
<keyword id="KW-0677">Repeat</keyword>
<keyword id="KW-0832">Ubl conjugation</keyword>
<reference key="1">
    <citation type="journal article" date="1998" name="Gene">
        <title>Molecular cloning and testicular expression of the gene transcripts encoding the murine multiubiquitin-chain-binding protein (Mcb1).</title>
        <authorList>
            <person name="Pusch W."/>
            <person name="Jaehner D."/>
            <person name="Ivell R."/>
        </authorList>
    </citation>
    <scope>NUCLEOTIDE SEQUENCE [MRNA]</scope>
</reference>
<reference key="2">
    <citation type="journal article" date="2000" name="EMBO J.">
        <title>Developmentally regulated, alternative splicing of the Rpn10 gene generates multiple forms of 26S proteasomes.</title>
        <authorList>
            <person name="Kawahara H."/>
            <person name="Kasahara M."/>
            <person name="Nishiyama A."/>
            <person name="Ohsumi K."/>
            <person name="Goto T."/>
            <person name="Kishimoto T."/>
            <person name="Saeki Y."/>
            <person name="Yokosawa H."/>
            <person name="Shimbara N."/>
            <person name="Murata S."/>
            <person name="Chiba T."/>
            <person name="Suzuki K."/>
            <person name="Tanaka K."/>
        </authorList>
    </citation>
    <scope>NUCLEOTIDE SEQUENCE [GENOMIC DNA / MRNA]</scope>
    <scope>ALTERNATIVE SPLICING</scope>
    <source>
        <strain>129/SvJ</strain>
        <tissue>Embryo</tissue>
        <tissue>Testis</tissue>
    </source>
</reference>
<reference key="3">
    <citation type="submission" date="1999-08" db="EMBL/GenBank/DDBJ databases">
        <title>Molecular cloning of a multiubiquitin chain binding subunit of mouse 26S proteasome.</title>
        <authorList>
            <person name="Masumoto H."/>
            <person name="Lee H.-J."/>
            <person name="Tomioka M."/>
            <person name="Saido T.C."/>
        </authorList>
    </citation>
    <scope>NUCLEOTIDE SEQUENCE (ISOFORM RPN10B)</scope>
</reference>
<reference key="4">
    <citation type="journal article" date="2004" name="Genome Res.">
        <title>The status, quality, and expansion of the NIH full-length cDNA project: the Mammalian Gene Collection (MGC).</title>
        <authorList>
            <consortium name="The MGC Project Team"/>
        </authorList>
    </citation>
    <scope>NUCLEOTIDE SEQUENCE [LARGE SCALE MRNA] (ISOFORM RPN10B)</scope>
</reference>
<reference key="5">
    <citation type="journal article" date="2004" name="Mol. Cell. Proteomics">
        <title>Phosphoproteomic analysis of the developing mouse brain.</title>
        <authorList>
            <person name="Ballif B.A."/>
            <person name="Villen J."/>
            <person name="Beausoleil S.A."/>
            <person name="Schwartz D."/>
            <person name="Gygi S.P."/>
        </authorList>
    </citation>
    <scope>PHOSPHORYLATION [LARGE SCALE ANALYSIS] AT THR-250</scope>
    <scope>IDENTIFICATION BY MASS SPECTROMETRY [LARGE SCALE ANALYSIS]</scope>
    <source>
        <tissue>Embryonic brain</tissue>
    </source>
</reference>
<reference key="6">
    <citation type="journal article" date="2006" name="Circ. Res.">
        <title>Mapping the murine cardiac 26S proteasome complexes.</title>
        <authorList>
            <person name="Gomes A.V."/>
            <person name="Zong C."/>
            <person name="Edmondson R.D."/>
            <person name="Li X."/>
            <person name="Stefani E."/>
            <person name="Zhang J."/>
            <person name="Jones R.C."/>
            <person name="Thyparambil S."/>
            <person name="Wang G.W."/>
            <person name="Qiao X."/>
            <person name="Bardag-Gorce F."/>
            <person name="Ping P."/>
        </authorList>
    </citation>
    <scope>IDENTIFICATION IN THE 19S PROTEASOME REGULATORY COMPLEX</scope>
</reference>
<reference key="7">
    <citation type="journal article" date="2007" name="Proc. Natl. Acad. Sci. U.S.A.">
        <title>Large-scale phosphorylation analysis of mouse liver.</title>
        <authorList>
            <person name="Villen J."/>
            <person name="Beausoleil S.A."/>
            <person name="Gerber S.A."/>
            <person name="Gygi S.P."/>
        </authorList>
    </citation>
    <scope>PHOSPHORYLATION [LARGE SCALE ANALYSIS] AT THR-250</scope>
    <scope>IDENTIFICATION BY MASS SPECTROMETRY [LARGE SCALE ANALYSIS]</scope>
    <source>
        <tissue>Liver</tissue>
    </source>
</reference>
<reference key="8">
    <citation type="journal article" date="2010" name="Cell">
        <title>A tissue-specific atlas of mouse protein phosphorylation and expression.</title>
        <authorList>
            <person name="Huttlin E.L."/>
            <person name="Jedrychowski M.P."/>
            <person name="Elias J.E."/>
            <person name="Goswami T."/>
            <person name="Rad R."/>
            <person name="Beausoleil S.A."/>
            <person name="Villen J."/>
            <person name="Haas W."/>
            <person name="Sowa M.E."/>
            <person name="Gygi S.P."/>
        </authorList>
    </citation>
    <scope>PHOSPHORYLATION [LARGE SCALE ANALYSIS] AT THR-250; THR-253 AND SER-256</scope>
    <scope>PHOSPHORYLATION [LARGE SCALE ANALYSIS] AT THR-250 AND SER-259 (ISOFORMS RPN10B AND RPN10C)</scope>
    <scope>IDENTIFICATION BY MASS SPECTROMETRY [LARGE SCALE ANALYSIS]</scope>
    <source>
        <tissue>Brain</tissue>
        <tissue>Brown adipose tissue</tissue>
        <tissue>Heart</tissue>
        <tissue>Kidney</tissue>
        <tissue>Liver</tissue>
        <tissue>Lung</tissue>
        <tissue>Pancreas</tissue>
        <tissue>Spleen</tissue>
        <tissue>Testis</tissue>
    </source>
</reference>
<protein>
    <recommendedName>
        <fullName>26S proteasome non-ATPase regulatory subunit 4</fullName>
    </recommendedName>
    <alternativeName>
        <fullName>26S proteasome regulatory subunit RPN10</fullName>
    </alternativeName>
    <alternativeName>
        <fullName>26S proteasome regulatory subunit S5A</fullName>
    </alternativeName>
    <alternativeName>
        <fullName>Multiubiquitin chain-binding protein</fullName>
    </alternativeName>
</protein>
<dbReference type="EMBL" id="AF013099">
    <property type="protein sequence ID" value="AAC53547.1"/>
    <property type="molecule type" value="mRNA"/>
</dbReference>
<dbReference type="EMBL" id="AB029090">
    <property type="protein sequence ID" value="BAA97572.1"/>
    <property type="molecule type" value="Genomic_DNA"/>
</dbReference>
<dbReference type="EMBL" id="AB029142">
    <property type="protein sequence ID" value="BAA97573.1"/>
    <property type="molecule type" value="mRNA"/>
</dbReference>
<dbReference type="EMBL" id="AB029143">
    <property type="protein sequence ID" value="BAA97574.1"/>
    <property type="molecule type" value="mRNA"/>
</dbReference>
<dbReference type="EMBL" id="AB029144">
    <property type="protein sequence ID" value="BAA97575.1"/>
    <property type="molecule type" value="mRNA"/>
</dbReference>
<dbReference type="EMBL" id="AB029145">
    <property type="protein sequence ID" value="BAA97576.1"/>
    <property type="molecule type" value="mRNA"/>
</dbReference>
<dbReference type="EMBL" id="AB029146">
    <property type="protein sequence ID" value="BAA97577.1"/>
    <property type="molecule type" value="mRNA"/>
</dbReference>
<dbReference type="EMBL" id="AF175574">
    <property type="protein sequence ID" value="AAG09199.1"/>
    <property type="molecule type" value="mRNA"/>
</dbReference>
<dbReference type="EMBL" id="BC009005">
    <property type="protein sequence ID" value="AAH09005.1"/>
    <property type="molecule type" value="mRNA"/>
</dbReference>
<dbReference type="CCDS" id="CCDS38541.1">
    <molecule id="O35226-1"/>
</dbReference>
<dbReference type="CCDS" id="CCDS71287.1">
    <molecule id="O35226-2"/>
</dbReference>
<dbReference type="PIR" id="JC6535">
    <property type="entry name" value="JC6535"/>
</dbReference>
<dbReference type="RefSeq" id="NP_001268946.1">
    <molecule id="O35226-2"/>
    <property type="nucleotide sequence ID" value="NM_001282017.2"/>
</dbReference>
<dbReference type="RefSeq" id="NP_032977.1">
    <molecule id="O35226-1"/>
    <property type="nucleotide sequence ID" value="NM_008951.3"/>
</dbReference>
<dbReference type="SMR" id="O35226"/>
<dbReference type="BioGRID" id="202431">
    <property type="interactions" value="68"/>
</dbReference>
<dbReference type="FunCoup" id="O35226">
    <property type="interactions" value="3229"/>
</dbReference>
<dbReference type="IntAct" id="O35226">
    <property type="interactions" value="23"/>
</dbReference>
<dbReference type="MINT" id="O35226"/>
<dbReference type="STRING" id="10090.ENSMUSP00000071589"/>
<dbReference type="GlyGen" id="O35226">
    <property type="glycosylation" value="1 site, 1 O-linked glycan (1 site)"/>
</dbReference>
<dbReference type="iPTMnet" id="O35226"/>
<dbReference type="PhosphoSitePlus" id="O35226"/>
<dbReference type="SwissPalm" id="O35226"/>
<dbReference type="REPRODUCTION-2DPAGE" id="IPI00345779"/>
<dbReference type="jPOST" id="O35226"/>
<dbReference type="PaxDb" id="10090-ENSMUSP00000071589"/>
<dbReference type="PeptideAtlas" id="O35226"/>
<dbReference type="ProteomicsDB" id="291698">
    <molecule id="O35226-1"/>
</dbReference>
<dbReference type="ProteomicsDB" id="291699">
    <molecule id="O35226-2"/>
</dbReference>
<dbReference type="ProteomicsDB" id="291700">
    <molecule id="O35226-3"/>
</dbReference>
<dbReference type="ProteomicsDB" id="291701">
    <molecule id="O35226-4"/>
</dbReference>
<dbReference type="ProteomicsDB" id="291702">
    <molecule id="O35226-5"/>
</dbReference>
<dbReference type="Pumba" id="O35226"/>
<dbReference type="Antibodypedia" id="20322">
    <property type="antibodies" value="449 antibodies from 38 providers"/>
</dbReference>
<dbReference type="DNASU" id="19185"/>
<dbReference type="Ensembl" id="ENSMUST00000071664.12">
    <molecule id="O35226-2"/>
    <property type="protein sequence ID" value="ENSMUSP00000071589.6"/>
    <property type="gene ID" value="ENSMUSG00000005625.16"/>
</dbReference>
<dbReference type="Ensembl" id="ENSMUST00000107237.8">
    <molecule id="O35226-1"/>
    <property type="protein sequence ID" value="ENSMUSP00000102857.2"/>
    <property type="gene ID" value="ENSMUSG00000005625.16"/>
</dbReference>
<dbReference type="Ensembl" id="ENSMUST00000117355.2">
    <molecule id="O35226-3"/>
    <property type="protein sequence ID" value="ENSMUSP00000113554.2"/>
    <property type="gene ID" value="ENSMUSG00000005625.16"/>
</dbReference>
<dbReference type="GeneID" id="19185"/>
<dbReference type="KEGG" id="mmu:19185"/>
<dbReference type="UCSC" id="uc008qhr.2">
    <molecule id="O35226-1"/>
    <property type="organism name" value="mouse"/>
</dbReference>
<dbReference type="UCSC" id="uc008qht.2">
    <molecule id="O35226-3"/>
    <property type="organism name" value="mouse"/>
</dbReference>
<dbReference type="UCSC" id="uc008qhu.2">
    <molecule id="O35226-4"/>
    <property type="organism name" value="mouse"/>
</dbReference>
<dbReference type="UCSC" id="uc008qhv.2">
    <molecule id="O35226-5"/>
    <property type="organism name" value="mouse"/>
</dbReference>
<dbReference type="AGR" id="MGI:1201670"/>
<dbReference type="CTD" id="5710"/>
<dbReference type="MGI" id="MGI:1201670">
    <property type="gene designation" value="Psmd4"/>
</dbReference>
<dbReference type="VEuPathDB" id="HostDB:ENSMUSG00000005625"/>
<dbReference type="eggNOG" id="KOG2884">
    <property type="taxonomic scope" value="Eukaryota"/>
</dbReference>
<dbReference type="GeneTree" id="ENSGT00530000064050"/>
<dbReference type="HOGENOM" id="CLU_033293_0_1_1"/>
<dbReference type="InParanoid" id="O35226"/>
<dbReference type="OMA" id="QMSMQDQ"/>
<dbReference type="OrthoDB" id="1731724at2759"/>
<dbReference type="PhylomeDB" id="O35226"/>
<dbReference type="TreeFam" id="TF106232"/>
<dbReference type="Reactome" id="R-MMU-9907900">
    <property type="pathway name" value="Proteasome assembly"/>
</dbReference>
<dbReference type="BioGRID-ORCS" id="19185">
    <property type="hits" value="31 hits in 77 CRISPR screens"/>
</dbReference>
<dbReference type="ChiTaRS" id="Psmd4">
    <property type="organism name" value="mouse"/>
</dbReference>
<dbReference type="PRO" id="PR:O35226"/>
<dbReference type="Proteomes" id="UP000000589">
    <property type="component" value="Chromosome 3"/>
</dbReference>
<dbReference type="RNAct" id="O35226">
    <property type="molecule type" value="protein"/>
</dbReference>
<dbReference type="Bgee" id="ENSMUSG00000005625">
    <property type="expression patterns" value="Expressed in yolk sac and 261 other cell types or tissues"/>
</dbReference>
<dbReference type="ExpressionAtlas" id="O35226">
    <property type="expression patterns" value="baseline and differential"/>
</dbReference>
<dbReference type="GO" id="GO:0005829">
    <property type="term" value="C:cytosol"/>
    <property type="evidence" value="ECO:0007669"/>
    <property type="project" value="Ensembl"/>
</dbReference>
<dbReference type="GO" id="GO:0005654">
    <property type="term" value="C:nucleoplasm"/>
    <property type="evidence" value="ECO:0007669"/>
    <property type="project" value="Ensembl"/>
</dbReference>
<dbReference type="GO" id="GO:0022624">
    <property type="term" value="C:proteasome accessory complex"/>
    <property type="evidence" value="ECO:0000314"/>
    <property type="project" value="UniProtKB"/>
</dbReference>
<dbReference type="GO" id="GO:0042802">
    <property type="term" value="F:identical protein binding"/>
    <property type="evidence" value="ECO:0007669"/>
    <property type="project" value="Ensembl"/>
</dbReference>
<dbReference type="CDD" id="cd22297">
    <property type="entry name" value="PSMD4_RAZUL"/>
    <property type="match status" value="1"/>
</dbReference>
<dbReference type="CDD" id="cd01452">
    <property type="entry name" value="VWA_26S_proteasome_subunit"/>
    <property type="match status" value="1"/>
</dbReference>
<dbReference type="FunFam" id="3.40.50.410:FF:000005">
    <property type="entry name" value="26S proteasome non-ATPase regulatory subunit 4"/>
    <property type="match status" value="1"/>
</dbReference>
<dbReference type="FunFam" id="6.10.300.40:FF:000001">
    <property type="entry name" value="26S proteasome non-ATPase regulatory subunit 4"/>
    <property type="match status" value="1"/>
</dbReference>
<dbReference type="Gene3D" id="6.10.250.380">
    <property type="match status" value="1"/>
</dbReference>
<dbReference type="Gene3D" id="6.10.300.40">
    <property type="match status" value="1"/>
</dbReference>
<dbReference type="Gene3D" id="3.40.50.410">
    <property type="entry name" value="von Willebrand factor, type A domain"/>
    <property type="match status" value="1"/>
</dbReference>
<dbReference type="InterPro" id="IPR027040">
    <property type="entry name" value="PSMD4"/>
</dbReference>
<dbReference type="InterPro" id="IPR049590">
    <property type="entry name" value="PSMD4_RAZUL-like"/>
</dbReference>
<dbReference type="InterPro" id="IPR003903">
    <property type="entry name" value="UIM_dom"/>
</dbReference>
<dbReference type="InterPro" id="IPR002035">
    <property type="entry name" value="VWF_A"/>
</dbReference>
<dbReference type="InterPro" id="IPR036465">
    <property type="entry name" value="vWFA_dom_sf"/>
</dbReference>
<dbReference type="PANTHER" id="PTHR10223">
    <property type="entry name" value="26S PROTEASOME NON-ATPASE REGULATORY SUBUNIT 4"/>
    <property type="match status" value="1"/>
</dbReference>
<dbReference type="PANTHER" id="PTHR10223:SF0">
    <property type="entry name" value="26S PROTEASOME NON-ATPASE REGULATORY SUBUNIT 4"/>
    <property type="match status" value="1"/>
</dbReference>
<dbReference type="Pfam" id="PF02809">
    <property type="entry name" value="UIM"/>
    <property type="match status" value="2"/>
</dbReference>
<dbReference type="Pfam" id="PF13519">
    <property type="entry name" value="VWA_2"/>
    <property type="match status" value="1"/>
</dbReference>
<dbReference type="SMART" id="SM00726">
    <property type="entry name" value="UIM"/>
    <property type="match status" value="2"/>
</dbReference>
<dbReference type="SMART" id="SM00327">
    <property type="entry name" value="VWA"/>
    <property type="match status" value="1"/>
</dbReference>
<dbReference type="SUPFAM" id="SSF53300">
    <property type="entry name" value="vWA-like"/>
    <property type="match status" value="1"/>
</dbReference>
<dbReference type="PROSITE" id="PS50330">
    <property type="entry name" value="UIM"/>
    <property type="match status" value="2"/>
</dbReference>
<dbReference type="PROSITE" id="PS50234">
    <property type="entry name" value="VWFA"/>
    <property type="match status" value="1"/>
</dbReference>
<evidence type="ECO:0000250" key="1"/>
<evidence type="ECO:0000250" key="2">
    <source>
        <dbReference type="UniProtKB" id="P55036"/>
    </source>
</evidence>
<evidence type="ECO:0000255" key="3">
    <source>
        <dbReference type="PROSITE-ProRule" id="PRU00213"/>
    </source>
</evidence>
<evidence type="ECO:0000255" key="4">
    <source>
        <dbReference type="PROSITE-ProRule" id="PRU00219"/>
    </source>
</evidence>
<evidence type="ECO:0000256" key="5">
    <source>
        <dbReference type="SAM" id="MobiDB-lite"/>
    </source>
</evidence>
<evidence type="ECO:0000269" key="6">
    <source>
    </source>
</evidence>
<evidence type="ECO:0000303" key="7">
    <source>
    </source>
</evidence>
<evidence type="ECO:0000305" key="8"/>
<evidence type="ECO:0007744" key="9">
    <source>
    </source>
</evidence>
<evidence type="ECO:0007744" key="10">
    <source>
    </source>
</evidence>
<evidence type="ECO:0007744" key="11">
    <source>
    </source>
</evidence>
<gene>
    <name type="primary">Psmd4</name>
    <name type="synonym">Mcb1</name>
</gene>
<organism>
    <name type="scientific">Mus musculus</name>
    <name type="common">Mouse</name>
    <dbReference type="NCBI Taxonomy" id="10090"/>
    <lineage>
        <taxon>Eukaryota</taxon>
        <taxon>Metazoa</taxon>
        <taxon>Chordata</taxon>
        <taxon>Craniata</taxon>
        <taxon>Vertebrata</taxon>
        <taxon>Euteleostomi</taxon>
        <taxon>Mammalia</taxon>
        <taxon>Eutheria</taxon>
        <taxon>Euarchontoglires</taxon>
        <taxon>Glires</taxon>
        <taxon>Rodentia</taxon>
        <taxon>Myomorpha</taxon>
        <taxon>Muroidea</taxon>
        <taxon>Muridae</taxon>
        <taxon>Murinae</taxon>
        <taxon>Mus</taxon>
        <taxon>Mus</taxon>
    </lineage>
</organism>
<sequence>MVLESTMVCVDNSEYMRNGDFLPTRLQAQQDAVNIVCHSKTRSNPENNVGLITLANDCEVLTTLTPDTGRILSKLHTVQPKGKITFCTGIRVAHLALKHRQGKNHKMRIIAFVGSPVEDNEKDLVKLAKRLKKEKVNVDIINFGEEEVNTEKLTAFVNTLNGKDGTGSHLVTVPPGPSLADALISSPILAGEGGAMLGLGASDFEFGVDPSADPELALALRVSMEEQRQRQEEEARRAAAASAAEAGIATPGTEDSDDALLKMTINQQEFGRPGLPDLSSMTEEEQIAYAMQMSLQGTEFSQESADMDASSAMDTSDPVKEEDDYDVMQDPEFLQSVLENLPGVDPNNAAIRSVMGALASQATKDGKNDKKEEEKK</sequence>
<proteinExistence type="evidence at protein level"/>
<accession>O35226</accession>
<accession>Q91V59</accession>
<accession>Q9JJM0</accession>
<accession>Q9JJM1</accession>
<accession>Q9JJM2</accession>
<accession>Q9JJM3</accession>